<proteinExistence type="evidence at transcript level"/>
<evidence type="ECO:0000255" key="1"/>
<evidence type="ECO:0000305" key="2"/>
<keyword id="KW-0325">Glycoprotein</keyword>
<keyword id="KW-0472">Membrane</keyword>
<keyword id="KW-1185">Reference proteome</keyword>
<keyword id="KW-0812">Transmembrane</keyword>
<keyword id="KW-1133">Transmembrane helix</keyword>
<name>T179A_DANRE</name>
<feature type="chain" id="PRO_0000254554" description="Transmembrane protein 179">
    <location>
        <begin position="1"/>
        <end position="232"/>
    </location>
</feature>
<feature type="transmembrane region" description="Helical" evidence="1">
    <location>
        <begin position="6"/>
        <end position="26"/>
    </location>
</feature>
<feature type="transmembrane region" description="Helical" evidence="1">
    <location>
        <begin position="75"/>
        <end position="95"/>
    </location>
</feature>
<feature type="transmembrane region" description="Helical" evidence="1">
    <location>
        <begin position="114"/>
        <end position="134"/>
    </location>
</feature>
<feature type="transmembrane region" description="Helical" evidence="1">
    <location>
        <begin position="169"/>
        <end position="189"/>
    </location>
</feature>
<feature type="glycosylation site" description="N-linked (GlcNAc...) asparagine" evidence="1">
    <location>
        <position position="51"/>
    </location>
</feature>
<feature type="glycosylation site" description="N-linked (GlcNAc...) asparagine" evidence="1">
    <location>
        <position position="162"/>
    </location>
</feature>
<reference key="1">
    <citation type="journal article" date="2013" name="Nature">
        <title>The zebrafish reference genome sequence and its relationship to the human genome.</title>
        <authorList>
            <person name="Howe K."/>
            <person name="Clark M.D."/>
            <person name="Torroja C.F."/>
            <person name="Torrance J."/>
            <person name="Berthelot C."/>
            <person name="Muffato M."/>
            <person name="Collins J.E."/>
            <person name="Humphray S."/>
            <person name="McLaren K."/>
            <person name="Matthews L."/>
            <person name="McLaren S."/>
            <person name="Sealy I."/>
            <person name="Caccamo M."/>
            <person name="Churcher C."/>
            <person name="Scott C."/>
            <person name="Barrett J.C."/>
            <person name="Koch R."/>
            <person name="Rauch G.J."/>
            <person name="White S."/>
            <person name="Chow W."/>
            <person name="Kilian B."/>
            <person name="Quintais L.T."/>
            <person name="Guerra-Assuncao J.A."/>
            <person name="Zhou Y."/>
            <person name="Gu Y."/>
            <person name="Yen J."/>
            <person name="Vogel J.H."/>
            <person name="Eyre T."/>
            <person name="Redmond S."/>
            <person name="Banerjee R."/>
            <person name="Chi J."/>
            <person name="Fu B."/>
            <person name="Langley E."/>
            <person name="Maguire S.F."/>
            <person name="Laird G.K."/>
            <person name="Lloyd D."/>
            <person name="Kenyon E."/>
            <person name="Donaldson S."/>
            <person name="Sehra H."/>
            <person name="Almeida-King J."/>
            <person name="Loveland J."/>
            <person name="Trevanion S."/>
            <person name="Jones M."/>
            <person name="Quail M."/>
            <person name="Willey D."/>
            <person name="Hunt A."/>
            <person name="Burton J."/>
            <person name="Sims S."/>
            <person name="McLay K."/>
            <person name="Plumb B."/>
            <person name="Davis J."/>
            <person name="Clee C."/>
            <person name="Oliver K."/>
            <person name="Clark R."/>
            <person name="Riddle C."/>
            <person name="Elliot D."/>
            <person name="Threadgold G."/>
            <person name="Harden G."/>
            <person name="Ware D."/>
            <person name="Begum S."/>
            <person name="Mortimore B."/>
            <person name="Kerry G."/>
            <person name="Heath P."/>
            <person name="Phillimore B."/>
            <person name="Tracey A."/>
            <person name="Corby N."/>
            <person name="Dunn M."/>
            <person name="Johnson C."/>
            <person name="Wood J."/>
            <person name="Clark S."/>
            <person name="Pelan S."/>
            <person name="Griffiths G."/>
            <person name="Smith M."/>
            <person name="Glithero R."/>
            <person name="Howden P."/>
            <person name="Barker N."/>
            <person name="Lloyd C."/>
            <person name="Stevens C."/>
            <person name="Harley J."/>
            <person name="Holt K."/>
            <person name="Panagiotidis G."/>
            <person name="Lovell J."/>
            <person name="Beasley H."/>
            <person name="Henderson C."/>
            <person name="Gordon D."/>
            <person name="Auger K."/>
            <person name="Wright D."/>
            <person name="Collins J."/>
            <person name="Raisen C."/>
            <person name="Dyer L."/>
            <person name="Leung K."/>
            <person name="Robertson L."/>
            <person name="Ambridge K."/>
            <person name="Leongamornlert D."/>
            <person name="McGuire S."/>
            <person name="Gilderthorp R."/>
            <person name="Griffiths C."/>
            <person name="Manthravadi D."/>
            <person name="Nichol S."/>
            <person name="Barker G."/>
            <person name="Whitehead S."/>
            <person name="Kay M."/>
            <person name="Brown J."/>
            <person name="Murnane C."/>
            <person name="Gray E."/>
            <person name="Humphries M."/>
            <person name="Sycamore N."/>
            <person name="Barker D."/>
            <person name="Saunders D."/>
            <person name="Wallis J."/>
            <person name="Babbage A."/>
            <person name="Hammond S."/>
            <person name="Mashreghi-Mohammadi M."/>
            <person name="Barr L."/>
            <person name="Martin S."/>
            <person name="Wray P."/>
            <person name="Ellington A."/>
            <person name="Matthews N."/>
            <person name="Ellwood M."/>
            <person name="Woodmansey R."/>
            <person name="Clark G."/>
            <person name="Cooper J."/>
            <person name="Tromans A."/>
            <person name="Grafham D."/>
            <person name="Skuce C."/>
            <person name="Pandian R."/>
            <person name="Andrews R."/>
            <person name="Harrison E."/>
            <person name="Kimberley A."/>
            <person name="Garnett J."/>
            <person name="Fosker N."/>
            <person name="Hall R."/>
            <person name="Garner P."/>
            <person name="Kelly D."/>
            <person name="Bird C."/>
            <person name="Palmer S."/>
            <person name="Gehring I."/>
            <person name="Berger A."/>
            <person name="Dooley C.M."/>
            <person name="Ersan-Urun Z."/>
            <person name="Eser C."/>
            <person name="Geiger H."/>
            <person name="Geisler M."/>
            <person name="Karotki L."/>
            <person name="Kirn A."/>
            <person name="Konantz J."/>
            <person name="Konantz M."/>
            <person name="Oberlander M."/>
            <person name="Rudolph-Geiger S."/>
            <person name="Teucke M."/>
            <person name="Lanz C."/>
            <person name="Raddatz G."/>
            <person name="Osoegawa K."/>
            <person name="Zhu B."/>
            <person name="Rapp A."/>
            <person name="Widaa S."/>
            <person name="Langford C."/>
            <person name="Yang F."/>
            <person name="Schuster S.C."/>
            <person name="Carter N.P."/>
            <person name="Harrow J."/>
            <person name="Ning Z."/>
            <person name="Herrero J."/>
            <person name="Searle S.M."/>
            <person name="Enright A."/>
            <person name="Geisler R."/>
            <person name="Plasterk R.H."/>
            <person name="Lee C."/>
            <person name="Westerfield M."/>
            <person name="de Jong P.J."/>
            <person name="Zon L.I."/>
            <person name="Postlethwait J.H."/>
            <person name="Nusslein-Volhard C."/>
            <person name="Hubbard T.J."/>
            <person name="Roest Crollius H."/>
            <person name="Rogers J."/>
            <person name="Stemple D.L."/>
        </authorList>
    </citation>
    <scope>NUCLEOTIDE SEQUENCE [LARGE SCALE GENOMIC DNA]</scope>
    <source>
        <strain>Tuebingen</strain>
    </source>
</reference>
<reference key="2">
    <citation type="submission" date="2004-07" db="EMBL/GenBank/DDBJ databases">
        <authorList>
            <consortium name="NIH - Zebrafish Gene Collection (ZGC) project"/>
        </authorList>
    </citation>
    <scope>NUCLEOTIDE SEQUENCE [LARGE SCALE MRNA]</scope>
    <source>
        <tissue>Embryo</tissue>
    </source>
</reference>
<gene>
    <name type="primary">tmem179</name>
    <name type="ORF">si:dkey-85n7.1</name>
    <name type="ORF">zgc:101058</name>
</gene>
<dbReference type="EMBL" id="BX255913">
    <property type="protein sequence ID" value="CAI21249.1"/>
    <property type="molecule type" value="Genomic_DNA"/>
</dbReference>
<dbReference type="EMBL" id="BC078227">
    <property type="protein sequence ID" value="AAH78227.1"/>
    <property type="molecule type" value="mRNA"/>
</dbReference>
<dbReference type="RefSeq" id="NP_001003767.1">
    <property type="nucleotide sequence ID" value="NM_001003767.2"/>
</dbReference>
<dbReference type="FunCoup" id="Q6AZD1">
    <property type="interactions" value="383"/>
</dbReference>
<dbReference type="STRING" id="7955.ENSDARP00000022822"/>
<dbReference type="GlyCosmos" id="Q6AZD1">
    <property type="glycosylation" value="2 sites, No reported glycans"/>
</dbReference>
<dbReference type="PaxDb" id="7955-ENSDARP00000022822"/>
<dbReference type="Ensembl" id="ENSDART00000005473">
    <property type="protein sequence ID" value="ENSDARP00000022822"/>
    <property type="gene ID" value="ENSDARG00000013292"/>
</dbReference>
<dbReference type="GeneID" id="445310"/>
<dbReference type="KEGG" id="dre:445310"/>
<dbReference type="AGR" id="ZFIN:ZDB-GENE-040808-25"/>
<dbReference type="CTD" id="445310"/>
<dbReference type="ZFIN" id="ZDB-GENE-040808-25">
    <property type="gene designation" value="tmem179aa"/>
</dbReference>
<dbReference type="eggNOG" id="ENOG502QW4U">
    <property type="taxonomic scope" value="Eukaryota"/>
</dbReference>
<dbReference type="HOGENOM" id="CLU_103794_0_0_1"/>
<dbReference type="InParanoid" id="Q6AZD1"/>
<dbReference type="OMA" id="QNENMTM"/>
<dbReference type="OrthoDB" id="6423876at2759"/>
<dbReference type="PhylomeDB" id="Q6AZD1"/>
<dbReference type="PRO" id="PR:Q6AZD1"/>
<dbReference type="Proteomes" id="UP000000437">
    <property type="component" value="Chromosome 20"/>
</dbReference>
<dbReference type="Bgee" id="ENSDARG00000013292">
    <property type="expression patterns" value="Expressed in brain and 11 other cell types or tissues"/>
</dbReference>
<dbReference type="GO" id="GO:0016020">
    <property type="term" value="C:membrane"/>
    <property type="evidence" value="ECO:0007669"/>
    <property type="project" value="UniProtKB-SubCell"/>
</dbReference>
<dbReference type="InterPro" id="IPR029673">
    <property type="entry name" value="TMEM179"/>
</dbReference>
<dbReference type="PANTHER" id="PTHR31872">
    <property type="entry name" value="TRANSMEMBRANE PROTEIN 179"/>
    <property type="match status" value="1"/>
</dbReference>
<dbReference type="PANTHER" id="PTHR31872:SF5">
    <property type="entry name" value="TRANSMEMBRANE PROTEIN 179"/>
    <property type="match status" value="1"/>
</dbReference>
<organism>
    <name type="scientific">Danio rerio</name>
    <name type="common">Zebrafish</name>
    <name type="synonym">Brachydanio rerio</name>
    <dbReference type="NCBI Taxonomy" id="7955"/>
    <lineage>
        <taxon>Eukaryota</taxon>
        <taxon>Metazoa</taxon>
        <taxon>Chordata</taxon>
        <taxon>Craniata</taxon>
        <taxon>Vertebrata</taxon>
        <taxon>Euteleostomi</taxon>
        <taxon>Actinopterygii</taxon>
        <taxon>Neopterygii</taxon>
        <taxon>Teleostei</taxon>
        <taxon>Ostariophysi</taxon>
        <taxon>Cypriniformes</taxon>
        <taxon>Danionidae</taxon>
        <taxon>Danioninae</taxon>
        <taxon>Danio</taxon>
    </lineage>
</organism>
<protein>
    <recommendedName>
        <fullName>Transmembrane protein 179</fullName>
    </recommendedName>
</protein>
<accession>Q6AZD1</accession>
<comment type="subcellular location">
    <subcellularLocation>
        <location evidence="2">Membrane</location>
        <topology evidence="2">Multi-pass membrane protein</topology>
    </subcellularLocation>
</comment>
<comment type="similarity">
    <text evidence="2">Belongs to the TMEM179 family.</text>
</comment>
<sequence>MAVDNFLFGQCILYFLAFLFGFIAVVPLSENGDDFQGKCLLFTEGIWQNENMTMGKQRFIVEEWGPESSCRFITFVGIVSLILSAVQAWRTFFFLCKGHDDSLFHSFLNLLLSLLVLFVVFVAGTISSVGFSIWCDSVTENGAMPSSCEDLQDTDLELGVENSSFYDQFAIAQFGLWSAWLCWLGLTVLAFLKVYHNHRQQELLESLVQEKELLLGHPLQRSSYVYNRNAMI</sequence>